<protein>
    <recommendedName>
        <fullName>Putative protein phosphatase 2C-type</fullName>
        <ecNumber>3.1.3.16</ecNumber>
    </recommendedName>
</protein>
<dbReference type="EC" id="3.1.3.16"/>
<dbReference type="EMBL" id="CP000003">
    <property type="protein sequence ID" value="AAT87517.1"/>
    <property type="molecule type" value="Genomic_DNA"/>
</dbReference>
<dbReference type="RefSeq" id="WP_002983660.1">
    <property type="nucleotide sequence ID" value="NC_006086.1"/>
</dbReference>
<dbReference type="SMR" id="Q5XAP6"/>
<dbReference type="KEGG" id="spa:M6_Spy1382"/>
<dbReference type="HOGENOM" id="CLU_034545_4_1_9"/>
<dbReference type="BRENDA" id="3.1.3.16">
    <property type="organism ID" value="16491"/>
</dbReference>
<dbReference type="Proteomes" id="UP000001167">
    <property type="component" value="Chromosome"/>
</dbReference>
<dbReference type="GO" id="GO:0046872">
    <property type="term" value="F:metal ion binding"/>
    <property type="evidence" value="ECO:0007669"/>
    <property type="project" value="UniProtKB-KW"/>
</dbReference>
<dbReference type="GO" id="GO:0004722">
    <property type="term" value="F:protein serine/threonine phosphatase activity"/>
    <property type="evidence" value="ECO:0007669"/>
    <property type="project" value="UniProtKB-EC"/>
</dbReference>
<dbReference type="CDD" id="cd00143">
    <property type="entry name" value="PP2Cc"/>
    <property type="match status" value="1"/>
</dbReference>
<dbReference type="FunFam" id="3.60.40.10:FF:000002">
    <property type="entry name" value="Serine/threonine phosphatase stp"/>
    <property type="match status" value="1"/>
</dbReference>
<dbReference type="Gene3D" id="3.60.40.10">
    <property type="entry name" value="PPM-type phosphatase domain"/>
    <property type="match status" value="1"/>
</dbReference>
<dbReference type="InterPro" id="IPR015655">
    <property type="entry name" value="PP2C"/>
</dbReference>
<dbReference type="InterPro" id="IPR036457">
    <property type="entry name" value="PPM-type-like_dom_sf"/>
</dbReference>
<dbReference type="InterPro" id="IPR001932">
    <property type="entry name" value="PPM-type_phosphatase-like_dom"/>
</dbReference>
<dbReference type="NCBIfam" id="NF033484">
    <property type="entry name" value="Stp1_PP2C_phos"/>
    <property type="match status" value="1"/>
</dbReference>
<dbReference type="PANTHER" id="PTHR47992">
    <property type="entry name" value="PROTEIN PHOSPHATASE"/>
    <property type="match status" value="1"/>
</dbReference>
<dbReference type="Pfam" id="PF13672">
    <property type="entry name" value="PP2C_2"/>
    <property type="match status" value="1"/>
</dbReference>
<dbReference type="SMART" id="SM00331">
    <property type="entry name" value="PP2C_SIG"/>
    <property type="match status" value="1"/>
</dbReference>
<dbReference type="SMART" id="SM00332">
    <property type="entry name" value="PP2Cc"/>
    <property type="match status" value="1"/>
</dbReference>
<dbReference type="SUPFAM" id="SSF81606">
    <property type="entry name" value="PP2C-like"/>
    <property type="match status" value="1"/>
</dbReference>
<dbReference type="PROSITE" id="PS51746">
    <property type="entry name" value="PPM_2"/>
    <property type="match status" value="1"/>
</dbReference>
<name>PP2C_STRP6</name>
<sequence>MKISLKTDIGQKRSNNQDFINKFDNKKGITLVILADGMGGHRAGNIASEMTVTDLGREWVKTDFTELSQIRDWLFETIQSENQRIYDLGQSEDFKGMGTTVEAVALVESSAIYAHIGDSRIGLVHDGHYTLLTSDHSLVNELVKAGQITEEEAASHPQRNIITQSIGQASPVEPDLGVRVLEPGDYLVINSDGLTNMISNDEIVTILGSKVSLDEKNQEMIDLANLRGGLDNITIALVHNESEDVE</sequence>
<comment type="catalytic activity">
    <reaction>
        <text>O-phospho-L-seryl-[protein] + H2O = L-seryl-[protein] + phosphate</text>
        <dbReference type="Rhea" id="RHEA:20629"/>
        <dbReference type="Rhea" id="RHEA-COMP:9863"/>
        <dbReference type="Rhea" id="RHEA-COMP:11604"/>
        <dbReference type="ChEBI" id="CHEBI:15377"/>
        <dbReference type="ChEBI" id="CHEBI:29999"/>
        <dbReference type="ChEBI" id="CHEBI:43474"/>
        <dbReference type="ChEBI" id="CHEBI:83421"/>
        <dbReference type="EC" id="3.1.3.16"/>
    </reaction>
</comment>
<comment type="catalytic activity">
    <reaction>
        <text>O-phospho-L-threonyl-[protein] + H2O = L-threonyl-[protein] + phosphate</text>
        <dbReference type="Rhea" id="RHEA:47004"/>
        <dbReference type="Rhea" id="RHEA-COMP:11060"/>
        <dbReference type="Rhea" id="RHEA-COMP:11605"/>
        <dbReference type="ChEBI" id="CHEBI:15377"/>
        <dbReference type="ChEBI" id="CHEBI:30013"/>
        <dbReference type="ChEBI" id="CHEBI:43474"/>
        <dbReference type="ChEBI" id="CHEBI:61977"/>
        <dbReference type="EC" id="3.1.3.16"/>
    </reaction>
</comment>
<comment type="cofactor">
    <cofactor evidence="2">
        <name>Mg(2+)</name>
        <dbReference type="ChEBI" id="CHEBI:18420"/>
    </cofactor>
    <cofactor evidence="2">
        <name>Mn(2+)</name>
        <dbReference type="ChEBI" id="CHEBI:29035"/>
    </cofactor>
    <text evidence="2">Binds 2 magnesium or manganese ions per subunit.</text>
</comment>
<comment type="mass spectrometry"/>
<keyword id="KW-0903">Direct protein sequencing</keyword>
<keyword id="KW-0378">Hydrolase</keyword>
<keyword id="KW-0460">Magnesium</keyword>
<keyword id="KW-0464">Manganese</keyword>
<keyword id="KW-0479">Metal-binding</keyword>
<keyword id="KW-0904">Protein phosphatase</keyword>
<reference evidence="6" key="1">
    <citation type="journal article" date="2004" name="J. Infect. Dis.">
        <title>Progress toward characterization of the group A Streptococcus metagenome: complete genome sequence of a macrolide-resistant serotype M6 strain.</title>
        <authorList>
            <person name="Banks D.J."/>
            <person name="Porcella S.F."/>
            <person name="Barbian K.D."/>
            <person name="Beres S.B."/>
            <person name="Philips L.E."/>
            <person name="Voyich J.M."/>
            <person name="DeLeo F.R."/>
            <person name="Martin J.M."/>
            <person name="Somerville G.A."/>
            <person name="Musser J.M."/>
        </authorList>
    </citation>
    <scope>NUCLEOTIDE SEQUENCE [LARGE SCALE GENOMIC DNA]</scope>
    <source>
        <strain>ATCC BAA-946 / MGAS10394</strain>
    </source>
</reference>
<reference evidence="5" key="2">
    <citation type="submission" date="2000-05" db="UniProtKB">
        <title>Two-dimensional gel electrophoresis map of Streptococcus pyogenes proteins.</title>
        <authorList>
            <person name="Hogan D.A."/>
            <person name="Du P."/>
            <person name="Stevenson T.I."/>
            <person name="Whitton M."/>
            <person name="Kilby G.W."/>
            <person name="Rogers J."/>
            <person name="VanBogelen R.A."/>
        </authorList>
    </citation>
    <scope>PROTEIN SEQUENCE OF 28-57; 85-120 AND 217-227</scope>
    <scope>MASS SPECTROMETRY</scope>
    <source>
        <strain evidence="4">JRS4 / Serotype M6</strain>
    </source>
</reference>
<proteinExistence type="evidence at protein level"/>
<accession>Q5XAP6</accession>
<accession>P82576</accession>
<evidence type="ECO:0000250" key="1"/>
<evidence type="ECO:0000250" key="2">
    <source>
        <dbReference type="UniProtKB" id="O14156"/>
    </source>
</evidence>
<evidence type="ECO:0000255" key="3">
    <source>
        <dbReference type="PROSITE-ProRule" id="PRU01082"/>
    </source>
</evidence>
<evidence type="ECO:0000269" key="4">
    <source ref="2"/>
</evidence>
<evidence type="ECO:0000305" key="5"/>
<evidence type="ECO:0000312" key="6">
    <source>
        <dbReference type="EMBL" id="AAT87517.1"/>
    </source>
</evidence>
<feature type="chain" id="PRO_0000273577" description="Putative protein phosphatase 2C-type">
    <location>
        <begin position="1"/>
        <end position="246"/>
    </location>
</feature>
<feature type="domain" description="PPM-type phosphatase" evidence="3">
    <location>
        <begin position="2"/>
        <end position="240"/>
    </location>
</feature>
<feature type="binding site" evidence="2">
    <location>
        <position position="36"/>
    </location>
    <ligand>
        <name>Mn(2+)</name>
        <dbReference type="ChEBI" id="CHEBI:29035"/>
        <label>1</label>
    </ligand>
</feature>
<feature type="binding site" evidence="2">
    <location>
        <position position="36"/>
    </location>
    <ligand>
        <name>Mn(2+)</name>
        <dbReference type="ChEBI" id="CHEBI:29035"/>
        <label>2</label>
    </ligand>
</feature>
<feature type="binding site" evidence="1">
    <location>
        <position position="37"/>
    </location>
    <ligand>
        <name>Mn(2+)</name>
        <dbReference type="ChEBI" id="CHEBI:29035"/>
        <label>1</label>
    </ligand>
</feature>
<feature type="binding site" evidence="2">
    <location>
        <position position="192"/>
    </location>
    <ligand>
        <name>Mn(2+)</name>
        <dbReference type="ChEBI" id="CHEBI:29035"/>
        <label>2</label>
    </ligand>
</feature>
<feature type="binding site" evidence="2">
    <location>
        <position position="231"/>
    </location>
    <ligand>
        <name>Mn(2+)</name>
        <dbReference type="ChEBI" id="CHEBI:29035"/>
        <label>2</label>
    </ligand>
</feature>
<organism>
    <name type="scientific">Streptococcus pyogenes serotype M6 (strain ATCC BAA-946 / MGAS10394)</name>
    <dbReference type="NCBI Taxonomy" id="286636"/>
    <lineage>
        <taxon>Bacteria</taxon>
        <taxon>Bacillati</taxon>
        <taxon>Bacillota</taxon>
        <taxon>Bacilli</taxon>
        <taxon>Lactobacillales</taxon>
        <taxon>Streptococcaceae</taxon>
        <taxon>Streptococcus</taxon>
    </lineage>
</organism>
<gene>
    <name type="ordered locus">M6_Spy1382</name>
</gene>